<name>NDHH_CRYJA</name>
<comment type="function">
    <text evidence="1">NDH shuttles electrons from NAD(P)H:plastoquinone, via FMN and iron-sulfur (Fe-S) centers, to quinones in the photosynthetic chain and possibly in a chloroplast respiratory chain. The immediate electron acceptor for the enzyme in this species is believed to be plastoquinone. Couples the redox reaction to proton translocation, and thus conserves the redox energy in a proton gradient.</text>
</comment>
<comment type="catalytic activity">
    <reaction evidence="1">
        <text>a plastoquinone + NADH + (n+1) H(+)(in) = a plastoquinol + NAD(+) + n H(+)(out)</text>
        <dbReference type="Rhea" id="RHEA:42608"/>
        <dbReference type="Rhea" id="RHEA-COMP:9561"/>
        <dbReference type="Rhea" id="RHEA-COMP:9562"/>
        <dbReference type="ChEBI" id="CHEBI:15378"/>
        <dbReference type="ChEBI" id="CHEBI:17757"/>
        <dbReference type="ChEBI" id="CHEBI:57540"/>
        <dbReference type="ChEBI" id="CHEBI:57945"/>
        <dbReference type="ChEBI" id="CHEBI:62192"/>
    </reaction>
</comment>
<comment type="catalytic activity">
    <reaction evidence="1">
        <text>a plastoquinone + NADPH + (n+1) H(+)(in) = a plastoquinol + NADP(+) + n H(+)(out)</text>
        <dbReference type="Rhea" id="RHEA:42612"/>
        <dbReference type="Rhea" id="RHEA-COMP:9561"/>
        <dbReference type="Rhea" id="RHEA-COMP:9562"/>
        <dbReference type="ChEBI" id="CHEBI:15378"/>
        <dbReference type="ChEBI" id="CHEBI:17757"/>
        <dbReference type="ChEBI" id="CHEBI:57783"/>
        <dbReference type="ChEBI" id="CHEBI:58349"/>
        <dbReference type="ChEBI" id="CHEBI:62192"/>
    </reaction>
</comment>
<comment type="subunit">
    <text evidence="1">NDH is composed of at least 16 different subunits, 5 of which are encoded in the nucleus.</text>
</comment>
<comment type="subcellular location">
    <subcellularLocation>
        <location evidence="1">Plastid</location>
        <location evidence="1">Chloroplast thylakoid membrane</location>
        <topology evidence="1">Peripheral membrane protein</topology>
        <orientation evidence="1">Stromal side</orientation>
    </subcellularLocation>
</comment>
<comment type="similarity">
    <text evidence="1">Belongs to the complex I 49 kDa subunit family.</text>
</comment>
<reference key="1">
    <citation type="journal article" date="2008" name="BMC Plant Biol.">
        <title>Complete nucleotide sequence of the Cryptomeria japonica D. Don. chloroplast genome and comparative chloroplast genomics: diversified genomic structure of coniferous species.</title>
        <authorList>
            <person name="Hirao T."/>
            <person name="Watanabe A."/>
            <person name="Kurita M."/>
            <person name="Kondo T."/>
            <person name="Takata K."/>
        </authorList>
    </citation>
    <scope>NUCLEOTIDE SEQUENCE [LARGE SCALE GENOMIC DNA]</scope>
</reference>
<feature type="chain" id="PRO_0000357981" description="NAD(P)H-quinone oxidoreductase subunit H, chloroplastic">
    <location>
        <begin position="1"/>
        <end position="393"/>
    </location>
</feature>
<organism>
    <name type="scientific">Cryptomeria japonica</name>
    <name type="common">Japanese cedar</name>
    <name type="synonym">Cupressus japonica</name>
    <dbReference type="NCBI Taxonomy" id="3369"/>
    <lineage>
        <taxon>Eukaryota</taxon>
        <taxon>Viridiplantae</taxon>
        <taxon>Streptophyta</taxon>
        <taxon>Embryophyta</taxon>
        <taxon>Tracheophyta</taxon>
        <taxon>Spermatophyta</taxon>
        <taxon>Pinopsida</taxon>
        <taxon>Pinidae</taxon>
        <taxon>Conifers II</taxon>
        <taxon>Cupressales</taxon>
        <taxon>Cupressaceae</taxon>
        <taxon>Cryptomeria</taxon>
    </lineage>
</organism>
<keyword id="KW-0150">Chloroplast</keyword>
<keyword id="KW-0472">Membrane</keyword>
<keyword id="KW-0520">NAD</keyword>
<keyword id="KW-0521">NADP</keyword>
<keyword id="KW-0934">Plastid</keyword>
<keyword id="KW-0618">Plastoquinone</keyword>
<keyword id="KW-0874">Quinone</keyword>
<keyword id="KW-0793">Thylakoid</keyword>
<keyword id="KW-1278">Translocase</keyword>
<keyword id="KW-0813">Transport</keyword>
<evidence type="ECO:0000255" key="1">
    <source>
        <dbReference type="HAMAP-Rule" id="MF_01358"/>
    </source>
</evidence>
<geneLocation type="chloroplast"/>
<proteinExistence type="inferred from homology"/>
<protein>
    <recommendedName>
        <fullName evidence="1">NAD(P)H-quinone oxidoreductase subunit H, chloroplastic</fullName>
        <ecNumber evidence="1">7.1.1.-</ecNumber>
    </recommendedName>
    <alternativeName>
        <fullName>NAD(P)H dehydrogenase subunit H</fullName>
    </alternativeName>
    <alternativeName>
        <fullName evidence="1">NADH-plastoquinone oxidoreductase 49 kDa subunit</fullName>
    </alternativeName>
    <alternativeName>
        <fullName evidence="1">NADH-plastoquinone oxidoreductase subunit H</fullName>
    </alternativeName>
</protein>
<accession>B1VKJ0</accession>
<dbReference type="EC" id="7.1.1.-" evidence="1"/>
<dbReference type="EMBL" id="AP009377">
    <property type="protein sequence ID" value="BAG16701.1"/>
    <property type="molecule type" value="Genomic_DNA"/>
</dbReference>
<dbReference type="RefSeq" id="YP_001806703.1">
    <property type="nucleotide sequence ID" value="NC_010548.1"/>
</dbReference>
<dbReference type="SMR" id="B1VKJ0"/>
<dbReference type="GeneID" id="6166553"/>
<dbReference type="KEGG" id="cjf:6166553"/>
<dbReference type="OrthoDB" id="1845069at2759"/>
<dbReference type="GO" id="GO:0009535">
    <property type="term" value="C:chloroplast thylakoid membrane"/>
    <property type="evidence" value="ECO:0007669"/>
    <property type="project" value="UniProtKB-SubCell"/>
</dbReference>
<dbReference type="GO" id="GO:0051287">
    <property type="term" value="F:NAD binding"/>
    <property type="evidence" value="ECO:0007669"/>
    <property type="project" value="InterPro"/>
</dbReference>
<dbReference type="GO" id="GO:0016655">
    <property type="term" value="F:oxidoreductase activity, acting on NAD(P)H, quinone or similar compound as acceptor"/>
    <property type="evidence" value="ECO:0007669"/>
    <property type="project" value="UniProtKB-UniRule"/>
</dbReference>
<dbReference type="GO" id="GO:0048038">
    <property type="term" value="F:quinone binding"/>
    <property type="evidence" value="ECO:0007669"/>
    <property type="project" value="UniProtKB-KW"/>
</dbReference>
<dbReference type="GO" id="GO:0019684">
    <property type="term" value="P:photosynthesis, light reaction"/>
    <property type="evidence" value="ECO:0007669"/>
    <property type="project" value="UniProtKB-UniRule"/>
</dbReference>
<dbReference type="Gene3D" id="1.10.645.10">
    <property type="entry name" value="Cytochrome-c3 Hydrogenase, chain B"/>
    <property type="match status" value="1"/>
</dbReference>
<dbReference type="HAMAP" id="MF_01358">
    <property type="entry name" value="NDH1_NuoD"/>
    <property type="match status" value="1"/>
</dbReference>
<dbReference type="InterPro" id="IPR001135">
    <property type="entry name" value="NADH_Q_OxRdtase_suD"/>
</dbReference>
<dbReference type="InterPro" id="IPR014029">
    <property type="entry name" value="NADH_UbQ_OxRdtase_49kDa_CS"/>
</dbReference>
<dbReference type="InterPro" id="IPR022885">
    <property type="entry name" value="NDH1_su_D/H"/>
</dbReference>
<dbReference type="InterPro" id="IPR029014">
    <property type="entry name" value="NiFe-Hase_large"/>
</dbReference>
<dbReference type="NCBIfam" id="NF004739">
    <property type="entry name" value="PRK06075.1"/>
    <property type="match status" value="1"/>
</dbReference>
<dbReference type="NCBIfam" id="NF005649">
    <property type="entry name" value="PRK07415.1"/>
    <property type="match status" value="1"/>
</dbReference>
<dbReference type="PANTHER" id="PTHR11993:SF10">
    <property type="entry name" value="NADH DEHYDROGENASE [UBIQUINONE] IRON-SULFUR PROTEIN 2, MITOCHONDRIAL"/>
    <property type="match status" value="1"/>
</dbReference>
<dbReference type="PANTHER" id="PTHR11993">
    <property type="entry name" value="NADH-UBIQUINONE OXIDOREDUCTASE 49 KDA SUBUNIT"/>
    <property type="match status" value="1"/>
</dbReference>
<dbReference type="Pfam" id="PF00346">
    <property type="entry name" value="Complex1_49kDa"/>
    <property type="match status" value="1"/>
</dbReference>
<dbReference type="SUPFAM" id="SSF56762">
    <property type="entry name" value="HydB/Nqo4-like"/>
    <property type="match status" value="1"/>
</dbReference>
<dbReference type="PROSITE" id="PS00535">
    <property type="entry name" value="COMPLEX1_49K"/>
    <property type="match status" value="1"/>
</dbReference>
<gene>
    <name evidence="1" type="primary">ndhH</name>
</gene>
<sequence length="393" mass="45987">MIMVAREKDLMMVSMGPHHPSMHGVLRLIVTLDGEDVIDCEPVLGYLHRGMEKIAENRTIVQYLPYVTRWDYLATMFTEAITVNAPEKLENIQIPKRASYIRMIMLELSRIASHLLWLGPFMADIGAQTPFFYILREREMIYDLFEAATGMRMMHNYFRIGGVAVDLPYGWIDKCLDFCYYFFPKVTEYERLITRNPIFLKRVEGVGIISREEAIDWSLSGPMLRASGIQWDLRKVDHYECYDELDWEIQWQKEGDSLARYLLRIGEMKESIKIIRQALEVIPGGPYENLEVRRLNKGKDSQWNDFESRFISKKPSPTFELSKQEHYVRVEAPKGELGIFFIGDDNIFPWRWKIRPPGFINLQIPPQLVKRMKLADIMTILGSIDIIMGEVDR</sequence>